<gene>
    <name evidence="1" type="primary">ctaB</name>
    <name type="ordered locus">BCG9842_B1192</name>
</gene>
<feature type="chain" id="PRO_1000199643" description="Protoheme IX farnesyltransferase">
    <location>
        <begin position="1"/>
        <end position="307"/>
    </location>
</feature>
<feature type="transmembrane region" description="Helical" evidence="1">
    <location>
        <begin position="32"/>
        <end position="52"/>
    </location>
</feature>
<feature type="transmembrane region" description="Helical" evidence="1">
    <location>
        <begin position="65"/>
        <end position="85"/>
    </location>
</feature>
<feature type="transmembrane region" description="Helical" evidence="1">
    <location>
        <begin position="108"/>
        <end position="128"/>
    </location>
</feature>
<feature type="transmembrane region" description="Helical" evidence="1">
    <location>
        <begin position="131"/>
        <end position="151"/>
    </location>
</feature>
<feature type="transmembrane region" description="Helical" evidence="1">
    <location>
        <begin position="158"/>
        <end position="178"/>
    </location>
</feature>
<feature type="transmembrane region" description="Helical" evidence="1">
    <location>
        <begin position="186"/>
        <end position="206"/>
    </location>
</feature>
<feature type="transmembrane region" description="Helical" evidence="1">
    <location>
        <begin position="251"/>
        <end position="271"/>
    </location>
</feature>
<feature type="transmembrane region" description="Helical" evidence="1">
    <location>
        <begin position="287"/>
        <end position="307"/>
    </location>
</feature>
<name>COXX_BACC2</name>
<protein>
    <recommendedName>
        <fullName evidence="1">Protoheme IX farnesyltransferase</fullName>
        <ecNumber evidence="1">2.5.1.141</ecNumber>
    </recommendedName>
    <alternativeName>
        <fullName evidence="1">Heme B farnesyltransferase</fullName>
    </alternativeName>
    <alternativeName>
        <fullName evidence="1">Heme O synthase</fullName>
    </alternativeName>
</protein>
<accession>B7IVI2</accession>
<sequence length="307" mass="34535">MNHATSELHDESAVTSVPETTRIQDLKALVKMGIVNSNTLTVFTGFWLALHFNGLSVMDNLDKLFFTIVGSGLVMAGVCCLNNYIDRDIDPLMERTKTRPTVTGKYKPGFALTFGLVILLLGFVFLLLTTPMAVLMGFIGAFTYVVLYSLWTKRKYTLNTVVGSISGAVPPLIGWAAIDPSLGHPIAWMLFLIMFIWQIPHFLALAMKRVDEYRNAGIPMLPVVHGFEITKRQIMIWTVCLLPLPFYMSGLGITFMVIATLLNIGWIVLGFYGFRKKDDIKWSVQMFVYSLNYLTILFVSMIVVTFF</sequence>
<organism>
    <name type="scientific">Bacillus cereus (strain G9842)</name>
    <dbReference type="NCBI Taxonomy" id="405531"/>
    <lineage>
        <taxon>Bacteria</taxon>
        <taxon>Bacillati</taxon>
        <taxon>Bacillota</taxon>
        <taxon>Bacilli</taxon>
        <taxon>Bacillales</taxon>
        <taxon>Bacillaceae</taxon>
        <taxon>Bacillus</taxon>
        <taxon>Bacillus cereus group</taxon>
    </lineage>
</organism>
<comment type="function">
    <text evidence="1">Converts heme B (protoheme IX) to heme O by substitution of the vinyl group on carbon 2 of heme B porphyrin ring with a hydroxyethyl farnesyl side group.</text>
</comment>
<comment type="catalytic activity">
    <reaction evidence="1">
        <text>heme b + (2E,6E)-farnesyl diphosphate + H2O = Fe(II)-heme o + diphosphate</text>
        <dbReference type="Rhea" id="RHEA:28070"/>
        <dbReference type="ChEBI" id="CHEBI:15377"/>
        <dbReference type="ChEBI" id="CHEBI:33019"/>
        <dbReference type="ChEBI" id="CHEBI:60344"/>
        <dbReference type="ChEBI" id="CHEBI:60530"/>
        <dbReference type="ChEBI" id="CHEBI:175763"/>
        <dbReference type="EC" id="2.5.1.141"/>
    </reaction>
</comment>
<comment type="pathway">
    <text evidence="1">Porphyrin-containing compound metabolism; heme O biosynthesis; heme O from protoheme: step 1/1.</text>
</comment>
<comment type="subunit">
    <text evidence="1">Interacts with CtaA.</text>
</comment>
<comment type="subcellular location">
    <subcellularLocation>
        <location evidence="1">Cell membrane</location>
        <topology evidence="1">Multi-pass membrane protein</topology>
    </subcellularLocation>
</comment>
<comment type="miscellaneous">
    <text evidence="1">Carbon 2 of the heme B porphyrin ring is defined according to the Fischer nomenclature.</text>
</comment>
<comment type="similarity">
    <text evidence="1">Belongs to the UbiA prenyltransferase family. Protoheme IX farnesyltransferase subfamily.</text>
</comment>
<dbReference type="EC" id="2.5.1.141" evidence="1"/>
<dbReference type="EMBL" id="CP001186">
    <property type="protein sequence ID" value="ACK95916.1"/>
    <property type="molecule type" value="Genomic_DNA"/>
</dbReference>
<dbReference type="RefSeq" id="WP_001015054.1">
    <property type="nucleotide sequence ID" value="NC_011772.1"/>
</dbReference>
<dbReference type="SMR" id="B7IVI2"/>
<dbReference type="KEGG" id="bcg:BCG9842_B1192"/>
<dbReference type="HOGENOM" id="CLU_029631_0_0_9"/>
<dbReference type="UniPathway" id="UPA00834">
    <property type="reaction ID" value="UER00712"/>
</dbReference>
<dbReference type="Proteomes" id="UP000006744">
    <property type="component" value="Chromosome"/>
</dbReference>
<dbReference type="GO" id="GO:0005886">
    <property type="term" value="C:plasma membrane"/>
    <property type="evidence" value="ECO:0007669"/>
    <property type="project" value="UniProtKB-SubCell"/>
</dbReference>
<dbReference type="GO" id="GO:0008495">
    <property type="term" value="F:protoheme IX farnesyltransferase activity"/>
    <property type="evidence" value="ECO:0007669"/>
    <property type="project" value="UniProtKB-UniRule"/>
</dbReference>
<dbReference type="GO" id="GO:0048034">
    <property type="term" value="P:heme O biosynthetic process"/>
    <property type="evidence" value="ECO:0007669"/>
    <property type="project" value="UniProtKB-UniRule"/>
</dbReference>
<dbReference type="CDD" id="cd13957">
    <property type="entry name" value="PT_UbiA_Cox10"/>
    <property type="match status" value="1"/>
</dbReference>
<dbReference type="FunFam" id="1.10.357.140:FF:000001">
    <property type="entry name" value="Protoheme IX farnesyltransferase"/>
    <property type="match status" value="1"/>
</dbReference>
<dbReference type="Gene3D" id="1.10.357.140">
    <property type="entry name" value="UbiA prenyltransferase"/>
    <property type="match status" value="1"/>
</dbReference>
<dbReference type="HAMAP" id="MF_00154">
    <property type="entry name" value="CyoE_CtaB"/>
    <property type="match status" value="1"/>
</dbReference>
<dbReference type="InterPro" id="IPR006369">
    <property type="entry name" value="Protohaem_IX_farnesylTrfase"/>
</dbReference>
<dbReference type="InterPro" id="IPR000537">
    <property type="entry name" value="UbiA_prenyltransferase"/>
</dbReference>
<dbReference type="InterPro" id="IPR030470">
    <property type="entry name" value="UbiA_prenylTrfase_CS"/>
</dbReference>
<dbReference type="InterPro" id="IPR044878">
    <property type="entry name" value="UbiA_sf"/>
</dbReference>
<dbReference type="NCBIfam" id="TIGR01473">
    <property type="entry name" value="cyoE_ctaB"/>
    <property type="match status" value="1"/>
</dbReference>
<dbReference type="PANTHER" id="PTHR43448">
    <property type="entry name" value="PROTOHEME IX FARNESYLTRANSFERASE, MITOCHONDRIAL"/>
    <property type="match status" value="1"/>
</dbReference>
<dbReference type="PANTHER" id="PTHR43448:SF2">
    <property type="entry name" value="PROTOHEME IX FARNESYLTRANSFERASE, MITOCHONDRIAL"/>
    <property type="match status" value="1"/>
</dbReference>
<dbReference type="Pfam" id="PF01040">
    <property type="entry name" value="UbiA"/>
    <property type="match status" value="1"/>
</dbReference>
<dbReference type="PROSITE" id="PS00943">
    <property type="entry name" value="UBIA"/>
    <property type="match status" value="1"/>
</dbReference>
<keyword id="KW-1003">Cell membrane</keyword>
<keyword id="KW-0350">Heme biosynthesis</keyword>
<keyword id="KW-0472">Membrane</keyword>
<keyword id="KW-0808">Transferase</keyword>
<keyword id="KW-0812">Transmembrane</keyword>
<keyword id="KW-1133">Transmembrane helix</keyword>
<evidence type="ECO:0000255" key="1">
    <source>
        <dbReference type="HAMAP-Rule" id="MF_00154"/>
    </source>
</evidence>
<reference key="1">
    <citation type="submission" date="2008-10" db="EMBL/GenBank/DDBJ databases">
        <title>Genome sequence of Bacillus cereus G9842.</title>
        <authorList>
            <person name="Dodson R.J."/>
            <person name="Durkin A.S."/>
            <person name="Rosovitz M.J."/>
            <person name="Rasko D.A."/>
            <person name="Hoffmaster A."/>
            <person name="Ravel J."/>
            <person name="Sutton G."/>
        </authorList>
    </citation>
    <scope>NUCLEOTIDE SEQUENCE [LARGE SCALE GENOMIC DNA]</scope>
    <source>
        <strain>G9842</strain>
    </source>
</reference>
<proteinExistence type="inferred from homology"/>